<reference key="1">
    <citation type="journal article" date="2006" name="J. Bacteriol.">
        <title>Chromosome rearrangement and diversification of Francisella tularensis revealed by the type B (OSU18) genome sequence.</title>
        <authorList>
            <person name="Petrosino J.F."/>
            <person name="Xiang Q."/>
            <person name="Karpathy S.E."/>
            <person name="Jiang H."/>
            <person name="Yerrapragada S."/>
            <person name="Liu Y."/>
            <person name="Gioia J."/>
            <person name="Hemphill L."/>
            <person name="Gonzalez A."/>
            <person name="Raghavan T.M."/>
            <person name="Uzman A."/>
            <person name="Fox G.E."/>
            <person name="Highlander S."/>
            <person name="Reichard M."/>
            <person name="Morton R.J."/>
            <person name="Clinkenbeard K.D."/>
            <person name="Weinstock G.M."/>
        </authorList>
    </citation>
    <scope>NUCLEOTIDE SEQUENCE [LARGE SCALE GENOMIC DNA]</scope>
    <source>
        <strain>OSU18</strain>
    </source>
</reference>
<protein>
    <recommendedName>
        <fullName evidence="1">Ribosomal RNA large subunit methyltransferase E</fullName>
        <ecNumber evidence="1">2.1.1.166</ecNumber>
    </recommendedName>
    <alternativeName>
        <fullName evidence="1">23S rRNA Um2552 methyltransferase</fullName>
    </alternativeName>
    <alternativeName>
        <fullName evidence="1">rRNA (uridine-2'-O-)-methyltransferase</fullName>
    </alternativeName>
</protein>
<dbReference type="EC" id="2.1.1.166" evidence="1"/>
<dbReference type="EMBL" id="CP000437">
    <property type="protein sequence ID" value="ABI82416.1"/>
    <property type="molecule type" value="Genomic_DNA"/>
</dbReference>
<dbReference type="RefSeq" id="WP_003014702.1">
    <property type="nucleotide sequence ID" value="NC_017463.1"/>
</dbReference>
<dbReference type="SMR" id="Q0BNB8"/>
<dbReference type="KEGG" id="fth:FTH_0425"/>
<dbReference type="GO" id="GO:0005737">
    <property type="term" value="C:cytoplasm"/>
    <property type="evidence" value="ECO:0007669"/>
    <property type="project" value="UniProtKB-SubCell"/>
</dbReference>
<dbReference type="GO" id="GO:0008650">
    <property type="term" value="F:rRNA (uridine-2'-O-)-methyltransferase activity"/>
    <property type="evidence" value="ECO:0007669"/>
    <property type="project" value="UniProtKB-UniRule"/>
</dbReference>
<dbReference type="FunFam" id="3.40.50.150:FF:000005">
    <property type="entry name" value="Ribosomal RNA large subunit methyltransferase E"/>
    <property type="match status" value="1"/>
</dbReference>
<dbReference type="Gene3D" id="3.40.50.150">
    <property type="entry name" value="Vaccinia Virus protein VP39"/>
    <property type="match status" value="1"/>
</dbReference>
<dbReference type="HAMAP" id="MF_01547">
    <property type="entry name" value="RNA_methyltr_E"/>
    <property type="match status" value="1"/>
</dbReference>
<dbReference type="InterPro" id="IPR050082">
    <property type="entry name" value="RNA_methyltr_RlmE"/>
</dbReference>
<dbReference type="InterPro" id="IPR002877">
    <property type="entry name" value="RNA_MeTrfase_FtsJ_dom"/>
</dbReference>
<dbReference type="InterPro" id="IPR015507">
    <property type="entry name" value="rRNA-MeTfrase_E"/>
</dbReference>
<dbReference type="InterPro" id="IPR029063">
    <property type="entry name" value="SAM-dependent_MTases_sf"/>
</dbReference>
<dbReference type="PANTHER" id="PTHR10920">
    <property type="entry name" value="RIBOSOMAL RNA METHYLTRANSFERASE"/>
    <property type="match status" value="1"/>
</dbReference>
<dbReference type="PANTHER" id="PTHR10920:SF18">
    <property type="entry name" value="RRNA METHYLTRANSFERASE 2, MITOCHONDRIAL"/>
    <property type="match status" value="1"/>
</dbReference>
<dbReference type="Pfam" id="PF01728">
    <property type="entry name" value="FtsJ"/>
    <property type="match status" value="1"/>
</dbReference>
<dbReference type="PIRSF" id="PIRSF005461">
    <property type="entry name" value="23S_rRNA_mtase"/>
    <property type="match status" value="1"/>
</dbReference>
<dbReference type="SUPFAM" id="SSF53335">
    <property type="entry name" value="S-adenosyl-L-methionine-dependent methyltransferases"/>
    <property type="match status" value="1"/>
</dbReference>
<accession>Q0BNB8</accession>
<comment type="function">
    <text evidence="1">Specifically methylates the uridine in position 2552 of 23S rRNA at the 2'-O position of the ribose in the fully assembled 50S ribosomal subunit.</text>
</comment>
<comment type="catalytic activity">
    <reaction evidence="1">
        <text>uridine(2552) in 23S rRNA + S-adenosyl-L-methionine = 2'-O-methyluridine(2552) in 23S rRNA + S-adenosyl-L-homocysteine + H(+)</text>
        <dbReference type="Rhea" id="RHEA:42720"/>
        <dbReference type="Rhea" id="RHEA-COMP:10202"/>
        <dbReference type="Rhea" id="RHEA-COMP:10203"/>
        <dbReference type="ChEBI" id="CHEBI:15378"/>
        <dbReference type="ChEBI" id="CHEBI:57856"/>
        <dbReference type="ChEBI" id="CHEBI:59789"/>
        <dbReference type="ChEBI" id="CHEBI:65315"/>
        <dbReference type="ChEBI" id="CHEBI:74478"/>
        <dbReference type="EC" id="2.1.1.166"/>
    </reaction>
</comment>
<comment type="subcellular location">
    <subcellularLocation>
        <location evidence="1">Cytoplasm</location>
    </subcellularLocation>
</comment>
<comment type="similarity">
    <text evidence="1">Belongs to the class I-like SAM-binding methyltransferase superfamily. RNA methyltransferase RlmE family.</text>
</comment>
<sequence>MSKGSSTKKWLHEHTSDYYVIQANKLGYRSRASFKILEIQDKYQLFKPNMFVVDLGASPGGWSEQVIKYIGKNGKLIALDLLEMAPIAGVEFIQGDFSSDETYQKLNTLVNNQKIDCVISDMAPNLSGNKTSDQAKSIYLLELALDFANTNLNKNGSFVAKVFQGQGSDEYLKLVRESFNKVIQFKPKSSRAKSREFYVIATEFKG</sequence>
<proteinExistence type="inferred from homology"/>
<gene>
    <name evidence="1" type="primary">rlmE</name>
    <name evidence="1" type="synonym">ftsJ</name>
    <name evidence="1" type="synonym">rrmJ</name>
    <name type="ordered locus">FTH_0425</name>
</gene>
<feature type="chain" id="PRO_0000282747" description="Ribosomal RNA large subunit methyltransferase E">
    <location>
        <begin position="1"/>
        <end position="206"/>
    </location>
</feature>
<feature type="active site" description="Proton acceptor" evidence="1">
    <location>
        <position position="161"/>
    </location>
</feature>
<feature type="binding site" evidence="1">
    <location>
        <position position="60"/>
    </location>
    <ligand>
        <name>S-adenosyl-L-methionine</name>
        <dbReference type="ChEBI" id="CHEBI:59789"/>
    </ligand>
</feature>
<feature type="binding site" evidence="1">
    <location>
        <position position="62"/>
    </location>
    <ligand>
        <name>S-adenosyl-L-methionine</name>
        <dbReference type="ChEBI" id="CHEBI:59789"/>
    </ligand>
</feature>
<feature type="binding site" evidence="1">
    <location>
        <position position="80"/>
    </location>
    <ligand>
        <name>S-adenosyl-L-methionine</name>
        <dbReference type="ChEBI" id="CHEBI:59789"/>
    </ligand>
</feature>
<feature type="binding site" evidence="1">
    <location>
        <position position="96"/>
    </location>
    <ligand>
        <name>S-adenosyl-L-methionine</name>
        <dbReference type="ChEBI" id="CHEBI:59789"/>
    </ligand>
</feature>
<feature type="binding site" evidence="1">
    <location>
        <position position="121"/>
    </location>
    <ligand>
        <name>S-adenosyl-L-methionine</name>
        <dbReference type="ChEBI" id="CHEBI:59789"/>
    </ligand>
</feature>
<organism>
    <name type="scientific">Francisella tularensis subsp. holarctica (strain OSU18)</name>
    <dbReference type="NCBI Taxonomy" id="393011"/>
    <lineage>
        <taxon>Bacteria</taxon>
        <taxon>Pseudomonadati</taxon>
        <taxon>Pseudomonadota</taxon>
        <taxon>Gammaproteobacteria</taxon>
        <taxon>Thiotrichales</taxon>
        <taxon>Francisellaceae</taxon>
        <taxon>Francisella</taxon>
    </lineage>
</organism>
<evidence type="ECO:0000255" key="1">
    <source>
        <dbReference type="HAMAP-Rule" id="MF_01547"/>
    </source>
</evidence>
<name>RLME_FRATO</name>
<keyword id="KW-0963">Cytoplasm</keyword>
<keyword id="KW-0489">Methyltransferase</keyword>
<keyword id="KW-0698">rRNA processing</keyword>
<keyword id="KW-0949">S-adenosyl-L-methionine</keyword>
<keyword id="KW-0808">Transferase</keyword>